<organism>
    <name type="scientific">Xanthomonas axonopodis pv. citri (strain 306)</name>
    <dbReference type="NCBI Taxonomy" id="190486"/>
    <lineage>
        <taxon>Bacteria</taxon>
        <taxon>Pseudomonadati</taxon>
        <taxon>Pseudomonadota</taxon>
        <taxon>Gammaproteobacteria</taxon>
        <taxon>Lysobacterales</taxon>
        <taxon>Lysobacteraceae</taxon>
        <taxon>Xanthomonas</taxon>
    </lineage>
</organism>
<accession>Q8PPB5</accession>
<reference key="1">
    <citation type="journal article" date="2002" name="Nature">
        <title>Comparison of the genomes of two Xanthomonas pathogens with differing host specificities.</title>
        <authorList>
            <person name="da Silva A.C.R."/>
            <person name="Ferro J.A."/>
            <person name="Reinach F.C."/>
            <person name="Farah C.S."/>
            <person name="Furlan L.R."/>
            <person name="Quaggio R.B."/>
            <person name="Monteiro-Vitorello C.B."/>
            <person name="Van Sluys M.A."/>
            <person name="Almeida N.F. Jr."/>
            <person name="Alves L.M.C."/>
            <person name="do Amaral A.M."/>
            <person name="Bertolini M.C."/>
            <person name="Camargo L.E.A."/>
            <person name="Camarotte G."/>
            <person name="Cannavan F."/>
            <person name="Cardozo J."/>
            <person name="Chambergo F."/>
            <person name="Ciapina L.P."/>
            <person name="Cicarelli R.M.B."/>
            <person name="Coutinho L.L."/>
            <person name="Cursino-Santos J.R."/>
            <person name="El-Dorry H."/>
            <person name="Faria J.B."/>
            <person name="Ferreira A.J.S."/>
            <person name="Ferreira R.C.C."/>
            <person name="Ferro M.I.T."/>
            <person name="Formighieri E.F."/>
            <person name="Franco M.C."/>
            <person name="Greggio C.C."/>
            <person name="Gruber A."/>
            <person name="Katsuyama A.M."/>
            <person name="Kishi L.T."/>
            <person name="Leite R.P."/>
            <person name="Lemos E.G.M."/>
            <person name="Lemos M.V.F."/>
            <person name="Locali E.C."/>
            <person name="Machado M.A."/>
            <person name="Madeira A.M.B.N."/>
            <person name="Martinez-Rossi N.M."/>
            <person name="Martins E.C."/>
            <person name="Meidanis J."/>
            <person name="Menck C.F.M."/>
            <person name="Miyaki C.Y."/>
            <person name="Moon D.H."/>
            <person name="Moreira L.M."/>
            <person name="Novo M.T.M."/>
            <person name="Okura V.K."/>
            <person name="Oliveira M.C."/>
            <person name="Oliveira V.R."/>
            <person name="Pereira H.A."/>
            <person name="Rossi A."/>
            <person name="Sena J.A.D."/>
            <person name="Silva C."/>
            <person name="de Souza R.F."/>
            <person name="Spinola L.A.F."/>
            <person name="Takita M.A."/>
            <person name="Tamura R.E."/>
            <person name="Teixeira E.C."/>
            <person name="Tezza R.I.D."/>
            <person name="Trindade dos Santos M."/>
            <person name="Truffi D."/>
            <person name="Tsai S.M."/>
            <person name="White F.F."/>
            <person name="Setubal J.C."/>
            <person name="Kitajima J.P."/>
        </authorList>
    </citation>
    <scope>NUCLEOTIDE SEQUENCE [LARGE SCALE GENOMIC DNA]</scope>
    <source>
        <strain>306</strain>
    </source>
</reference>
<dbReference type="EC" id="2.1.1.199" evidence="1"/>
<dbReference type="EMBL" id="AE008923">
    <property type="protein sequence ID" value="AAM35660.1"/>
    <property type="molecule type" value="Genomic_DNA"/>
</dbReference>
<dbReference type="SMR" id="Q8PPB5"/>
<dbReference type="KEGG" id="xac:XAC0772"/>
<dbReference type="eggNOG" id="COG0275">
    <property type="taxonomic scope" value="Bacteria"/>
</dbReference>
<dbReference type="HOGENOM" id="CLU_038422_2_0_6"/>
<dbReference type="Proteomes" id="UP000000576">
    <property type="component" value="Chromosome"/>
</dbReference>
<dbReference type="GO" id="GO:0005737">
    <property type="term" value="C:cytoplasm"/>
    <property type="evidence" value="ECO:0007669"/>
    <property type="project" value="UniProtKB-SubCell"/>
</dbReference>
<dbReference type="GO" id="GO:0071424">
    <property type="term" value="F:rRNA (cytosine-N4-)-methyltransferase activity"/>
    <property type="evidence" value="ECO:0007669"/>
    <property type="project" value="UniProtKB-UniRule"/>
</dbReference>
<dbReference type="GO" id="GO:0070475">
    <property type="term" value="P:rRNA base methylation"/>
    <property type="evidence" value="ECO:0007669"/>
    <property type="project" value="UniProtKB-UniRule"/>
</dbReference>
<dbReference type="FunFam" id="1.10.150.170:FF:000001">
    <property type="entry name" value="Ribosomal RNA small subunit methyltransferase H"/>
    <property type="match status" value="1"/>
</dbReference>
<dbReference type="Gene3D" id="1.10.150.170">
    <property type="entry name" value="Putative methyltransferase TM0872, insert domain"/>
    <property type="match status" value="1"/>
</dbReference>
<dbReference type="Gene3D" id="3.40.50.150">
    <property type="entry name" value="Vaccinia Virus protein VP39"/>
    <property type="match status" value="1"/>
</dbReference>
<dbReference type="HAMAP" id="MF_01007">
    <property type="entry name" value="16SrRNA_methyltr_H"/>
    <property type="match status" value="1"/>
</dbReference>
<dbReference type="InterPro" id="IPR002903">
    <property type="entry name" value="RsmH"/>
</dbReference>
<dbReference type="InterPro" id="IPR023397">
    <property type="entry name" value="SAM-dep_MeTrfase_MraW_recog"/>
</dbReference>
<dbReference type="InterPro" id="IPR029063">
    <property type="entry name" value="SAM-dependent_MTases_sf"/>
</dbReference>
<dbReference type="NCBIfam" id="TIGR00006">
    <property type="entry name" value="16S rRNA (cytosine(1402)-N(4))-methyltransferase RsmH"/>
    <property type="match status" value="1"/>
</dbReference>
<dbReference type="PANTHER" id="PTHR11265:SF0">
    <property type="entry name" value="12S RRNA N4-METHYLCYTIDINE METHYLTRANSFERASE"/>
    <property type="match status" value="1"/>
</dbReference>
<dbReference type="PANTHER" id="PTHR11265">
    <property type="entry name" value="S-ADENOSYL-METHYLTRANSFERASE MRAW"/>
    <property type="match status" value="1"/>
</dbReference>
<dbReference type="Pfam" id="PF01795">
    <property type="entry name" value="Methyltransf_5"/>
    <property type="match status" value="1"/>
</dbReference>
<dbReference type="PIRSF" id="PIRSF004486">
    <property type="entry name" value="MraW"/>
    <property type="match status" value="1"/>
</dbReference>
<dbReference type="SUPFAM" id="SSF81799">
    <property type="entry name" value="Putative methyltransferase TM0872, insert domain"/>
    <property type="match status" value="1"/>
</dbReference>
<dbReference type="SUPFAM" id="SSF53335">
    <property type="entry name" value="S-adenosyl-L-methionine-dependent methyltransferases"/>
    <property type="match status" value="1"/>
</dbReference>
<keyword id="KW-0963">Cytoplasm</keyword>
<keyword id="KW-0489">Methyltransferase</keyword>
<keyword id="KW-0698">rRNA processing</keyword>
<keyword id="KW-0949">S-adenosyl-L-methionine</keyword>
<keyword id="KW-0808">Transferase</keyword>
<protein>
    <recommendedName>
        <fullName evidence="1">Ribosomal RNA small subunit methyltransferase H</fullName>
        <ecNumber evidence="1">2.1.1.199</ecNumber>
    </recommendedName>
    <alternativeName>
        <fullName evidence="1">16S rRNA m(4)C1402 methyltransferase</fullName>
    </alternativeName>
    <alternativeName>
        <fullName evidence="1">rRNA (cytosine-N(4)-)-methyltransferase RsmH</fullName>
    </alternativeName>
</protein>
<feature type="chain" id="PRO_0000108751" description="Ribosomal RNA small subunit methyltransferase H">
    <location>
        <begin position="1"/>
        <end position="342"/>
    </location>
</feature>
<feature type="region of interest" description="Disordered" evidence="2">
    <location>
        <begin position="311"/>
        <end position="342"/>
    </location>
</feature>
<feature type="binding site" evidence="1">
    <location>
        <begin position="36"/>
        <end position="38"/>
    </location>
    <ligand>
        <name>S-adenosyl-L-methionine</name>
        <dbReference type="ChEBI" id="CHEBI:59789"/>
    </ligand>
</feature>
<feature type="binding site" evidence="1">
    <location>
        <position position="56"/>
    </location>
    <ligand>
        <name>S-adenosyl-L-methionine</name>
        <dbReference type="ChEBI" id="CHEBI:59789"/>
    </ligand>
</feature>
<feature type="binding site" evidence="1">
    <location>
        <position position="82"/>
    </location>
    <ligand>
        <name>S-adenosyl-L-methionine</name>
        <dbReference type="ChEBI" id="CHEBI:59789"/>
    </ligand>
</feature>
<feature type="binding site" evidence="1">
    <location>
        <position position="100"/>
    </location>
    <ligand>
        <name>S-adenosyl-L-methionine</name>
        <dbReference type="ChEBI" id="CHEBI:59789"/>
    </ligand>
</feature>
<feature type="binding site" evidence="1">
    <location>
        <position position="107"/>
    </location>
    <ligand>
        <name>S-adenosyl-L-methionine</name>
        <dbReference type="ChEBI" id="CHEBI:59789"/>
    </ligand>
</feature>
<name>RSMH_XANAC</name>
<sequence length="342" mass="36059">MSQSPAAHVPVLYTQVLDGLQVTENGTYLDGTFGRGGHARGVLEHLGPGGRLLVMDKDPEAIAVAEHSFGGDARVSIHRGSFAGLGQVVAAATVDGILLDLGVSSPQLDVAGRGFSFGKDGPLDMRMDPDSGQSAAEWLAQASDREIADVLWTYGEERQSRRIARAIVARRAEQPLLRTAQLADLIASVMPRGDSKTHPATRSFQAIRIHINRELADLEAGLDAALGALKPGGRLAVISFHSLEDRIVKQFMARYAKAPPSNRRLPEAQPFVATLQLVSGAIKADDAELHVNPRARSAVLRVAEKLGLGNGESGMGKGNSAAASRFPTADSPFPASANGDAA</sequence>
<comment type="function">
    <text evidence="1">Specifically methylates the N4 position of cytidine in position 1402 (C1402) of 16S rRNA.</text>
</comment>
<comment type="catalytic activity">
    <reaction evidence="1">
        <text>cytidine(1402) in 16S rRNA + S-adenosyl-L-methionine = N(4)-methylcytidine(1402) in 16S rRNA + S-adenosyl-L-homocysteine + H(+)</text>
        <dbReference type="Rhea" id="RHEA:42928"/>
        <dbReference type="Rhea" id="RHEA-COMP:10286"/>
        <dbReference type="Rhea" id="RHEA-COMP:10287"/>
        <dbReference type="ChEBI" id="CHEBI:15378"/>
        <dbReference type="ChEBI" id="CHEBI:57856"/>
        <dbReference type="ChEBI" id="CHEBI:59789"/>
        <dbReference type="ChEBI" id="CHEBI:74506"/>
        <dbReference type="ChEBI" id="CHEBI:82748"/>
        <dbReference type="EC" id="2.1.1.199"/>
    </reaction>
</comment>
<comment type="subcellular location">
    <subcellularLocation>
        <location evidence="1">Cytoplasm</location>
    </subcellularLocation>
</comment>
<comment type="similarity">
    <text evidence="1">Belongs to the methyltransferase superfamily. RsmH family.</text>
</comment>
<proteinExistence type="inferred from homology"/>
<gene>
    <name evidence="1" type="primary">rsmH</name>
    <name type="synonym">mraW</name>
    <name type="ordered locus">XAC0772</name>
</gene>
<evidence type="ECO:0000255" key="1">
    <source>
        <dbReference type="HAMAP-Rule" id="MF_01007"/>
    </source>
</evidence>
<evidence type="ECO:0000256" key="2">
    <source>
        <dbReference type="SAM" id="MobiDB-lite"/>
    </source>
</evidence>